<feature type="chain" id="PRO_0000302468" description="Glycine cleavage system H protein">
    <location>
        <begin position="1"/>
        <end position="128"/>
    </location>
</feature>
<feature type="domain" description="Lipoyl-binding" evidence="2">
    <location>
        <begin position="24"/>
        <end position="106"/>
    </location>
</feature>
<feature type="modified residue" description="N6-lipoyllysine" evidence="1">
    <location>
        <position position="65"/>
    </location>
</feature>
<comment type="function">
    <text evidence="1">The glycine cleavage system catalyzes the degradation of glycine. The H protein shuttles the methylamine group of glycine from the P protein to the T protein.</text>
</comment>
<comment type="cofactor">
    <cofactor evidence="1">
        <name>(R)-lipoate</name>
        <dbReference type="ChEBI" id="CHEBI:83088"/>
    </cofactor>
    <text evidence="1">Binds 1 lipoyl cofactor covalently.</text>
</comment>
<comment type="subunit">
    <text evidence="1">The glycine cleavage system is composed of four proteins: P, T, L and H.</text>
</comment>
<comment type="similarity">
    <text evidence="1">Belongs to the GcvH family.</text>
</comment>
<proteinExistence type="inferred from homology"/>
<reference key="1">
    <citation type="journal article" date="2006" name="J. Bacteriol.">
        <title>Complete genome sequence of Yersinia pestis strains Antiqua and Nepal516: evidence of gene reduction in an emerging pathogen.</title>
        <authorList>
            <person name="Chain P.S.G."/>
            <person name="Hu P."/>
            <person name="Malfatti S.A."/>
            <person name="Radnedge L."/>
            <person name="Larimer F."/>
            <person name="Vergez L.M."/>
            <person name="Worsham P."/>
            <person name="Chu M.C."/>
            <person name="Andersen G.L."/>
        </authorList>
    </citation>
    <scope>NUCLEOTIDE SEQUENCE [LARGE SCALE GENOMIC DNA]</scope>
    <source>
        <strain>Nepal516</strain>
    </source>
</reference>
<reference key="2">
    <citation type="submission" date="2009-04" db="EMBL/GenBank/DDBJ databases">
        <title>Yersinia pestis Nepal516A whole genome shotgun sequencing project.</title>
        <authorList>
            <person name="Plunkett G. III"/>
            <person name="Anderson B.D."/>
            <person name="Baumler D.J."/>
            <person name="Burland V."/>
            <person name="Cabot E.L."/>
            <person name="Glasner J.D."/>
            <person name="Mau B."/>
            <person name="Neeno-Eckwall E."/>
            <person name="Perna N.T."/>
            <person name="Munk A.C."/>
            <person name="Tapia R."/>
            <person name="Green L.D."/>
            <person name="Rogers Y.C."/>
            <person name="Detter J.C."/>
            <person name="Bruce D.C."/>
            <person name="Brettin T.S."/>
        </authorList>
    </citation>
    <scope>NUCLEOTIDE SEQUENCE [LARGE SCALE GENOMIC DNA]</scope>
    <source>
        <strain>Nepal516</strain>
    </source>
</reference>
<organism>
    <name type="scientific">Yersinia pestis bv. Antiqua (strain Nepal516)</name>
    <dbReference type="NCBI Taxonomy" id="377628"/>
    <lineage>
        <taxon>Bacteria</taxon>
        <taxon>Pseudomonadati</taxon>
        <taxon>Pseudomonadota</taxon>
        <taxon>Gammaproteobacteria</taxon>
        <taxon>Enterobacterales</taxon>
        <taxon>Yersiniaceae</taxon>
        <taxon>Yersinia</taxon>
    </lineage>
</organism>
<sequence>MSNVPTELKYALSHEWVRADGDGVYSVGITEHAQELLGDMVFVDLPEVGSDVSAGSDCAVAESVKAASDIYAPISGEIVAVNTELENSPELVNSAPYTDGWLFSIKAADESELDNLLDADAYLAAIEE</sequence>
<accession>Q1CEZ8</accession>
<accession>C4GXE5</accession>
<dbReference type="EMBL" id="CP000305">
    <property type="protein sequence ID" value="ABG19432.1"/>
    <property type="molecule type" value="Genomic_DNA"/>
</dbReference>
<dbReference type="EMBL" id="ACNQ01000017">
    <property type="protein sequence ID" value="EEO75595.1"/>
    <property type="molecule type" value="Genomic_DNA"/>
</dbReference>
<dbReference type="RefSeq" id="WP_002209948.1">
    <property type="nucleotide sequence ID" value="NZ_ACNQ01000017.1"/>
</dbReference>
<dbReference type="SMR" id="Q1CEZ8"/>
<dbReference type="GeneID" id="57973734"/>
<dbReference type="KEGG" id="ypn:YPN_3105"/>
<dbReference type="HOGENOM" id="CLU_097408_2_0_6"/>
<dbReference type="Proteomes" id="UP000008936">
    <property type="component" value="Chromosome"/>
</dbReference>
<dbReference type="GO" id="GO:0005829">
    <property type="term" value="C:cytosol"/>
    <property type="evidence" value="ECO:0007669"/>
    <property type="project" value="TreeGrafter"/>
</dbReference>
<dbReference type="GO" id="GO:0005960">
    <property type="term" value="C:glycine cleavage complex"/>
    <property type="evidence" value="ECO:0007669"/>
    <property type="project" value="InterPro"/>
</dbReference>
<dbReference type="GO" id="GO:0019464">
    <property type="term" value="P:glycine decarboxylation via glycine cleavage system"/>
    <property type="evidence" value="ECO:0007669"/>
    <property type="project" value="UniProtKB-UniRule"/>
</dbReference>
<dbReference type="CDD" id="cd06848">
    <property type="entry name" value="GCS_H"/>
    <property type="match status" value="1"/>
</dbReference>
<dbReference type="FunFam" id="2.40.50.100:FF:000011">
    <property type="entry name" value="Glycine cleavage system H protein"/>
    <property type="match status" value="1"/>
</dbReference>
<dbReference type="Gene3D" id="2.40.50.100">
    <property type="match status" value="1"/>
</dbReference>
<dbReference type="HAMAP" id="MF_00272">
    <property type="entry name" value="GcvH"/>
    <property type="match status" value="1"/>
</dbReference>
<dbReference type="InterPro" id="IPR003016">
    <property type="entry name" value="2-oxoA_DH_lipoyl-BS"/>
</dbReference>
<dbReference type="InterPro" id="IPR000089">
    <property type="entry name" value="Biotin_lipoyl"/>
</dbReference>
<dbReference type="InterPro" id="IPR002930">
    <property type="entry name" value="GCV_H"/>
</dbReference>
<dbReference type="InterPro" id="IPR033753">
    <property type="entry name" value="GCV_H/Fam206"/>
</dbReference>
<dbReference type="InterPro" id="IPR017453">
    <property type="entry name" value="GCV_H_sub"/>
</dbReference>
<dbReference type="InterPro" id="IPR011053">
    <property type="entry name" value="Single_hybrid_motif"/>
</dbReference>
<dbReference type="NCBIfam" id="TIGR00527">
    <property type="entry name" value="gcvH"/>
    <property type="match status" value="1"/>
</dbReference>
<dbReference type="NCBIfam" id="NF002270">
    <property type="entry name" value="PRK01202.1"/>
    <property type="match status" value="1"/>
</dbReference>
<dbReference type="PANTHER" id="PTHR11715">
    <property type="entry name" value="GLYCINE CLEAVAGE SYSTEM H PROTEIN"/>
    <property type="match status" value="1"/>
</dbReference>
<dbReference type="PANTHER" id="PTHR11715:SF3">
    <property type="entry name" value="GLYCINE CLEAVAGE SYSTEM H PROTEIN-RELATED"/>
    <property type="match status" value="1"/>
</dbReference>
<dbReference type="Pfam" id="PF01597">
    <property type="entry name" value="GCV_H"/>
    <property type="match status" value="1"/>
</dbReference>
<dbReference type="SUPFAM" id="SSF51230">
    <property type="entry name" value="Single hybrid motif"/>
    <property type="match status" value="1"/>
</dbReference>
<dbReference type="PROSITE" id="PS50968">
    <property type="entry name" value="BIOTINYL_LIPOYL"/>
    <property type="match status" value="1"/>
</dbReference>
<dbReference type="PROSITE" id="PS00189">
    <property type="entry name" value="LIPOYL"/>
    <property type="match status" value="1"/>
</dbReference>
<protein>
    <recommendedName>
        <fullName evidence="1">Glycine cleavage system H protein</fullName>
    </recommendedName>
</protein>
<keyword id="KW-0450">Lipoyl</keyword>
<gene>
    <name evidence="1" type="primary">gcvH</name>
    <name type="ordered locus">YPN_3105</name>
    <name type="ORF">YP516_3524</name>
</gene>
<evidence type="ECO:0000255" key="1">
    <source>
        <dbReference type="HAMAP-Rule" id="MF_00272"/>
    </source>
</evidence>
<evidence type="ECO:0000255" key="2">
    <source>
        <dbReference type="PROSITE-ProRule" id="PRU01066"/>
    </source>
</evidence>
<name>GCSH_YERPN</name>